<organism>
    <name type="scientific">Desulforamulus reducens (strain ATCC BAA-1160 / DSM 100696 / MI-1)</name>
    <name type="common">Desulfotomaculum reducens</name>
    <dbReference type="NCBI Taxonomy" id="349161"/>
    <lineage>
        <taxon>Bacteria</taxon>
        <taxon>Bacillati</taxon>
        <taxon>Bacillota</taxon>
        <taxon>Clostridia</taxon>
        <taxon>Eubacteriales</taxon>
        <taxon>Peptococcaceae</taxon>
        <taxon>Desulforamulus</taxon>
    </lineage>
</organism>
<proteinExistence type="inferred from homology"/>
<gene>
    <name evidence="1" type="primary">rpsP</name>
    <name type="ordered locus">Dred_2055</name>
</gene>
<accession>A4J669</accession>
<dbReference type="EMBL" id="CP000612">
    <property type="protein sequence ID" value="ABO50572.1"/>
    <property type="molecule type" value="Genomic_DNA"/>
</dbReference>
<dbReference type="RefSeq" id="WP_011878378.1">
    <property type="nucleotide sequence ID" value="NC_009253.1"/>
</dbReference>
<dbReference type="SMR" id="A4J669"/>
<dbReference type="STRING" id="349161.Dred_2055"/>
<dbReference type="KEGG" id="drm:Dred_2055"/>
<dbReference type="eggNOG" id="COG0228">
    <property type="taxonomic scope" value="Bacteria"/>
</dbReference>
<dbReference type="HOGENOM" id="CLU_100590_5_0_9"/>
<dbReference type="OrthoDB" id="9807878at2"/>
<dbReference type="Proteomes" id="UP000001556">
    <property type="component" value="Chromosome"/>
</dbReference>
<dbReference type="GO" id="GO:0005737">
    <property type="term" value="C:cytoplasm"/>
    <property type="evidence" value="ECO:0007669"/>
    <property type="project" value="UniProtKB-ARBA"/>
</dbReference>
<dbReference type="GO" id="GO:0015935">
    <property type="term" value="C:small ribosomal subunit"/>
    <property type="evidence" value="ECO:0007669"/>
    <property type="project" value="TreeGrafter"/>
</dbReference>
<dbReference type="GO" id="GO:0003735">
    <property type="term" value="F:structural constituent of ribosome"/>
    <property type="evidence" value="ECO:0007669"/>
    <property type="project" value="InterPro"/>
</dbReference>
<dbReference type="GO" id="GO:0006412">
    <property type="term" value="P:translation"/>
    <property type="evidence" value="ECO:0007669"/>
    <property type="project" value="UniProtKB-UniRule"/>
</dbReference>
<dbReference type="Gene3D" id="3.30.1320.10">
    <property type="match status" value="1"/>
</dbReference>
<dbReference type="HAMAP" id="MF_00385">
    <property type="entry name" value="Ribosomal_bS16"/>
    <property type="match status" value="1"/>
</dbReference>
<dbReference type="InterPro" id="IPR000307">
    <property type="entry name" value="Ribosomal_bS16"/>
</dbReference>
<dbReference type="InterPro" id="IPR023803">
    <property type="entry name" value="Ribosomal_bS16_dom_sf"/>
</dbReference>
<dbReference type="NCBIfam" id="TIGR00002">
    <property type="entry name" value="S16"/>
    <property type="match status" value="1"/>
</dbReference>
<dbReference type="PANTHER" id="PTHR12919">
    <property type="entry name" value="30S RIBOSOMAL PROTEIN S16"/>
    <property type="match status" value="1"/>
</dbReference>
<dbReference type="PANTHER" id="PTHR12919:SF20">
    <property type="entry name" value="SMALL RIBOSOMAL SUBUNIT PROTEIN BS16M"/>
    <property type="match status" value="1"/>
</dbReference>
<dbReference type="Pfam" id="PF00886">
    <property type="entry name" value="Ribosomal_S16"/>
    <property type="match status" value="1"/>
</dbReference>
<dbReference type="SUPFAM" id="SSF54565">
    <property type="entry name" value="Ribosomal protein S16"/>
    <property type="match status" value="1"/>
</dbReference>
<evidence type="ECO:0000255" key="1">
    <source>
        <dbReference type="HAMAP-Rule" id="MF_00385"/>
    </source>
</evidence>
<evidence type="ECO:0000305" key="2"/>
<keyword id="KW-1185">Reference proteome</keyword>
<keyword id="KW-0687">Ribonucleoprotein</keyword>
<keyword id="KW-0689">Ribosomal protein</keyword>
<reference key="1">
    <citation type="submission" date="2007-03" db="EMBL/GenBank/DDBJ databases">
        <title>Complete sequence of Desulfotomaculum reducens MI-1.</title>
        <authorList>
            <consortium name="US DOE Joint Genome Institute"/>
            <person name="Copeland A."/>
            <person name="Lucas S."/>
            <person name="Lapidus A."/>
            <person name="Barry K."/>
            <person name="Detter J.C."/>
            <person name="Glavina del Rio T."/>
            <person name="Hammon N."/>
            <person name="Israni S."/>
            <person name="Dalin E."/>
            <person name="Tice H."/>
            <person name="Pitluck S."/>
            <person name="Sims D."/>
            <person name="Brettin T."/>
            <person name="Bruce D."/>
            <person name="Han C."/>
            <person name="Tapia R."/>
            <person name="Schmutz J."/>
            <person name="Larimer F."/>
            <person name="Land M."/>
            <person name="Hauser L."/>
            <person name="Kyrpides N."/>
            <person name="Kim E."/>
            <person name="Tebo B.M."/>
            <person name="Richardson P."/>
        </authorList>
    </citation>
    <scope>NUCLEOTIDE SEQUENCE [LARGE SCALE GENOMIC DNA]</scope>
    <source>
        <strain>ATCC BAA-1160 / DSM 100696 / MI-1</strain>
    </source>
</reference>
<comment type="similarity">
    <text evidence="1">Belongs to the bacterial ribosomal protein bS16 family.</text>
</comment>
<protein>
    <recommendedName>
        <fullName evidence="1">Small ribosomal subunit protein bS16</fullName>
    </recommendedName>
    <alternativeName>
        <fullName evidence="2">30S ribosomal protein S16</fullName>
    </alternativeName>
</protein>
<sequence length="89" mass="10020">MAVKIRLRRMGAKKNPFYRIVVADSRSPRDGRFIEEIGYYDPIKKPAEVKIDEAKAQDWLKKGAQLSDTAKSLFVKAGIIPGRAKTNEA</sequence>
<feature type="chain" id="PRO_1000072194" description="Small ribosomal subunit protein bS16">
    <location>
        <begin position="1"/>
        <end position="89"/>
    </location>
</feature>
<name>RS16_DESRM</name>